<name>MATK_GOMHA</name>
<dbReference type="EMBL" id="AY514800">
    <property type="protein sequence ID" value="AAT28230.1"/>
    <property type="molecule type" value="Genomic_DNA"/>
</dbReference>
<dbReference type="GO" id="GO:0009507">
    <property type="term" value="C:chloroplast"/>
    <property type="evidence" value="ECO:0007669"/>
    <property type="project" value="UniProtKB-SubCell"/>
</dbReference>
<dbReference type="GO" id="GO:0003723">
    <property type="term" value="F:RNA binding"/>
    <property type="evidence" value="ECO:0007669"/>
    <property type="project" value="UniProtKB-KW"/>
</dbReference>
<dbReference type="GO" id="GO:0006397">
    <property type="term" value="P:mRNA processing"/>
    <property type="evidence" value="ECO:0007669"/>
    <property type="project" value="UniProtKB-KW"/>
</dbReference>
<dbReference type="GO" id="GO:0008380">
    <property type="term" value="P:RNA splicing"/>
    <property type="evidence" value="ECO:0007669"/>
    <property type="project" value="UniProtKB-UniRule"/>
</dbReference>
<dbReference type="GO" id="GO:0008033">
    <property type="term" value="P:tRNA processing"/>
    <property type="evidence" value="ECO:0007669"/>
    <property type="project" value="UniProtKB-KW"/>
</dbReference>
<dbReference type="HAMAP" id="MF_01390">
    <property type="entry name" value="MatK"/>
    <property type="match status" value="1"/>
</dbReference>
<dbReference type="InterPro" id="IPR024937">
    <property type="entry name" value="Domain_X"/>
</dbReference>
<dbReference type="InterPro" id="IPR002866">
    <property type="entry name" value="Maturase_MatK"/>
</dbReference>
<dbReference type="InterPro" id="IPR024942">
    <property type="entry name" value="Maturase_MatK_N"/>
</dbReference>
<dbReference type="PANTHER" id="PTHR34811">
    <property type="entry name" value="MATURASE K"/>
    <property type="match status" value="1"/>
</dbReference>
<dbReference type="PANTHER" id="PTHR34811:SF1">
    <property type="entry name" value="MATURASE K"/>
    <property type="match status" value="1"/>
</dbReference>
<dbReference type="Pfam" id="PF01348">
    <property type="entry name" value="Intron_maturas2"/>
    <property type="match status" value="1"/>
</dbReference>
<dbReference type="Pfam" id="PF01824">
    <property type="entry name" value="MatK_N"/>
    <property type="match status" value="1"/>
</dbReference>
<comment type="function">
    <text evidence="1">Usually encoded in the trnK tRNA gene intron. Probably assists in splicing its own and other chloroplast group II introns.</text>
</comment>
<comment type="subcellular location">
    <subcellularLocation>
        <location>Plastid</location>
        <location>Chloroplast</location>
    </subcellularLocation>
</comment>
<comment type="similarity">
    <text evidence="1">Belongs to the intron maturase 2 family. MatK subfamily.</text>
</comment>
<reference key="1">
    <citation type="journal article" date="2005" name="Ann. Mo. Bot. Gard.">
        <title>Phylogenetics of Amaranthaceae based on matK/trnK sequence data -- evidence from parsimony, likelihood, and Bayesian analyses.</title>
        <authorList>
            <person name="Mueller K."/>
            <person name="Borsch T."/>
        </authorList>
    </citation>
    <scope>NUCLEOTIDE SEQUENCE [GENOMIC DNA]</scope>
</reference>
<geneLocation type="chloroplast"/>
<feature type="chain" id="PRO_0000143402" description="Maturase K">
    <location>
        <begin position="1"/>
        <end position="505"/>
    </location>
</feature>
<protein>
    <recommendedName>
        <fullName evidence="1">Maturase K</fullName>
    </recommendedName>
    <alternativeName>
        <fullName evidence="1">Intron maturase</fullName>
    </alternativeName>
</protein>
<sequence length="505" mass="59957">MEELQGHRELDRSWQHNFLYPLIFQEYIYTFAYDHGLNKLILLENVVDQKYSLLTVKRLITRLYQQNHLIFSANDSNQNEIFGHKHKKNLYSQMITEGFAVIVEIPFSLLLISSLDGKEKKIVKSPNLQSIHSIFPFLEDKFLYLNYVLDILIPYPAHLEILVQTLRYWLKDASSLHLLRFFLYECRNWTSRITSKESISFXKTRNRRLFLFLYNFYVCEYESFFVILRNQSSYLRSTSFGALLERIHFYRKFKYLVKVKACAVILCFFKEPFPHYVRYQGKALLASKGTSLLMHKWKYYFISFWQCYFSVWSQPRRIYINQLSNYSLDFMGFLSSVRFNSSVIRSQMLENSFLLENIPNKFRSMGPISPLSGSLAKPKFWTELGHPIGKSVWTGLSDSDIIDRFGRICRNLSHYYSGSSRKKNLYRIKYILRLSCARTLSRKHKSTVRAFLKRLGSEFLEEFFTEEGKFLSLILPRDFSTSGGLYKGRVWYLDIICIHNLVNDQ</sequence>
<organism>
    <name type="scientific">Gomphrena haageana</name>
    <name type="common">Haage's globe-amaranth</name>
    <name type="synonym">Rio Grande globe-amaranth</name>
    <dbReference type="NCBI Taxonomy" id="240061"/>
    <lineage>
        <taxon>Eukaryota</taxon>
        <taxon>Viridiplantae</taxon>
        <taxon>Streptophyta</taxon>
        <taxon>Embryophyta</taxon>
        <taxon>Tracheophyta</taxon>
        <taxon>Spermatophyta</taxon>
        <taxon>Magnoliopsida</taxon>
        <taxon>eudicotyledons</taxon>
        <taxon>Gunneridae</taxon>
        <taxon>Pentapetalae</taxon>
        <taxon>Caryophyllales</taxon>
        <taxon>Amaranthaceae</taxon>
        <taxon>Gomphrenoideae</taxon>
        <taxon>Gomphrena</taxon>
    </lineage>
</organism>
<proteinExistence type="inferred from homology"/>
<gene>
    <name evidence="1" type="primary">matK</name>
</gene>
<keyword id="KW-0150">Chloroplast</keyword>
<keyword id="KW-0507">mRNA processing</keyword>
<keyword id="KW-0934">Plastid</keyword>
<keyword id="KW-0694">RNA-binding</keyword>
<keyword id="KW-0819">tRNA processing</keyword>
<accession>Q5J308</accession>
<evidence type="ECO:0000255" key="1">
    <source>
        <dbReference type="HAMAP-Rule" id="MF_01390"/>
    </source>
</evidence>